<sequence>MTIQSTANHQDGYLPAILCLHGAGTNATIFNLQARTIVRCLKHKFRFIFVNAPFESLPGPGVIPTFAEIRPYLRWHCDENAIQEFDVSPELVDNERRLVRSMISDKIEQEATGPSLGIVGVMAFSQGTRVATGLCLDPEFGSSIQFAIIIAGTFPALSLENPVSDSETTNLFSGINGNKHEQLQIPSVHVQGTMDPWGPESARLLKECWSADLAMVVKFHGAHQVPTSKKDAQAVAQAVLSCWDSAQT</sequence>
<accession>I1S165</accession>
<dbReference type="EC" id="3.1.2.-" evidence="6"/>
<dbReference type="EMBL" id="HG970332">
    <property type="protein sequence ID" value="CEF75885.1"/>
    <property type="molecule type" value="Genomic_DNA"/>
</dbReference>
<dbReference type="RefSeq" id="XP_011319442.1">
    <property type="nucleotide sequence ID" value="XM_011321140.1"/>
</dbReference>
<dbReference type="SMR" id="I1S165"/>
<dbReference type="STRING" id="229533.I1S165"/>
<dbReference type="ESTHER" id="gibze-fsl2">
    <property type="family name" value="FSH1"/>
</dbReference>
<dbReference type="KEGG" id="fgr:FGSG_10463"/>
<dbReference type="VEuPathDB" id="FungiDB:FGRAMPH1_01G08163"/>
<dbReference type="eggNOG" id="KOG2551">
    <property type="taxonomic scope" value="Eukaryota"/>
</dbReference>
<dbReference type="HOGENOM" id="CLU_051938_0_1_1"/>
<dbReference type="InParanoid" id="I1S165"/>
<dbReference type="OrthoDB" id="44537at110618"/>
<dbReference type="Proteomes" id="UP000070720">
    <property type="component" value="Chromosome 1"/>
</dbReference>
<dbReference type="GO" id="GO:0005737">
    <property type="term" value="C:cytoplasm"/>
    <property type="evidence" value="ECO:0007669"/>
    <property type="project" value="TreeGrafter"/>
</dbReference>
<dbReference type="GO" id="GO:0005634">
    <property type="term" value="C:nucleus"/>
    <property type="evidence" value="ECO:0007669"/>
    <property type="project" value="TreeGrafter"/>
</dbReference>
<dbReference type="GO" id="GO:0016787">
    <property type="term" value="F:hydrolase activity"/>
    <property type="evidence" value="ECO:0007669"/>
    <property type="project" value="UniProtKB-KW"/>
</dbReference>
<dbReference type="GO" id="GO:0044550">
    <property type="term" value="P:secondary metabolite biosynthetic process"/>
    <property type="evidence" value="ECO:0007669"/>
    <property type="project" value="TreeGrafter"/>
</dbReference>
<dbReference type="Gene3D" id="3.40.50.1820">
    <property type="entry name" value="alpha/beta hydrolase"/>
    <property type="match status" value="1"/>
</dbReference>
<dbReference type="InterPro" id="IPR029058">
    <property type="entry name" value="AB_hydrolase_fold"/>
</dbReference>
<dbReference type="InterPro" id="IPR005645">
    <property type="entry name" value="FSH-like_dom"/>
</dbReference>
<dbReference type="InterPro" id="IPR050593">
    <property type="entry name" value="LovG"/>
</dbReference>
<dbReference type="PANTHER" id="PTHR48070:SF3">
    <property type="entry name" value="ESTERASE DBAE-RELATED"/>
    <property type="match status" value="1"/>
</dbReference>
<dbReference type="PANTHER" id="PTHR48070">
    <property type="entry name" value="ESTERASE OVCA2"/>
    <property type="match status" value="1"/>
</dbReference>
<dbReference type="Pfam" id="PF03959">
    <property type="entry name" value="FSH1"/>
    <property type="match status" value="1"/>
</dbReference>
<dbReference type="SUPFAM" id="SSF53474">
    <property type="entry name" value="alpha/beta-Hydrolases"/>
    <property type="match status" value="1"/>
</dbReference>
<comment type="function">
    <text evidence="2 3">Thioesterase; part of the gene cluster that mediates the biosynthesis of fusarielins F, G and H, decaketide compounds with 5 methylations and a decaline core that act as mycoestrogens as they stimulate growth of MCF-7 breast cancer cells (PubMed:22252016, PubMed:27983606). The initial compound in the pathway is produced by the reducing polyketide synthase FSL1. FSL1 lacks an active enoyl reductase (ER) domain and biosynthesis of fusarielins relies on the trans-acting enoyl reductase FSL5, before it is released through hydrolysis catalyzed by the thioesterase FSL2 (PubMed:22252016, PubMed:27983606). Fusarielins F, G, and H have a C11=C12 cis double bond and is fully reduced between C10 and C11 and between C12 and C13. FSL3 can be involved in the formation of the C11=C12 cis double bond by moving a hypothetical C10=C11 or C12=C13 trans double bond to form prefusarielin (PubMed:27983606). Prefusarielin is oxygenated at C15 and C16 by the cytochrome P450 monooxygenase FSL4, resulting in fusarielin F, which subsequently is epoxidized into fusarielin G by the same enzyme (PubMed:27983606). The final step in the pathway is a reduction of the carboxylic acid moiety to yield fusarielin H via a still undetermined mechanism (PubMed:27983606).</text>
</comment>
<comment type="pathway">
    <text evidence="3">Secondary metabolite biosynthesis.</text>
</comment>
<comment type="induction">
    <text evidence="2">Expression is positively regulated by the fusarielin biosynthesis cluster-specific transcription factor FSL7, probably via its binding at the 5'-CGGNNNCCG-3' motif present in the promoter of all the cluster genes.</text>
</comment>
<comment type="disruption phenotype">
    <text evidence="3">Abolishes the production of fusarielins F, G and H.</text>
</comment>
<comment type="similarity">
    <text evidence="5">Belongs to the LovG family.</text>
</comment>
<name>FSL2_GIBZE</name>
<keyword id="KW-0378">Hydrolase</keyword>
<keyword id="KW-1185">Reference proteome</keyword>
<proteinExistence type="evidence at transcript level"/>
<evidence type="ECO:0000250" key="1">
    <source>
        <dbReference type="UniProtKB" id="P38777"/>
    </source>
</evidence>
<evidence type="ECO:0000269" key="2">
    <source>
    </source>
</evidence>
<evidence type="ECO:0000269" key="3">
    <source>
    </source>
</evidence>
<evidence type="ECO:0000303" key="4">
    <source>
    </source>
</evidence>
<evidence type="ECO:0000305" key="5"/>
<evidence type="ECO:0000305" key="6">
    <source>
    </source>
</evidence>
<gene>
    <name evidence="4" type="primary">FSL2</name>
    <name type="ORF">FG10463</name>
    <name type="ORF">FGRAMPH1_01T08163</name>
</gene>
<feature type="chain" id="PRO_0000444960" description="Thioesterase FSL2">
    <location>
        <begin position="1"/>
        <end position="248"/>
    </location>
</feature>
<feature type="active site" description="Charge relay system" evidence="1">
    <location>
        <position position="125"/>
    </location>
</feature>
<feature type="active site" description="Charge relay system" evidence="1">
    <location>
        <position position="195"/>
    </location>
</feature>
<feature type="active site" description="Charge relay system" evidence="1">
    <location>
        <position position="223"/>
    </location>
</feature>
<protein>
    <recommendedName>
        <fullName evidence="4">Thioesterase FSL2</fullName>
        <ecNumber evidence="6">3.1.2.-</ecNumber>
    </recommendedName>
    <alternativeName>
        <fullName evidence="4">Fusarielin biosynthesis cluster protein 2</fullName>
    </alternativeName>
</protein>
<organism>
    <name type="scientific">Gibberella zeae (strain ATCC MYA-4620 / CBS 123657 / FGSC 9075 / NRRL 31084 / PH-1)</name>
    <name type="common">Wheat head blight fungus</name>
    <name type="synonym">Fusarium graminearum</name>
    <dbReference type="NCBI Taxonomy" id="229533"/>
    <lineage>
        <taxon>Eukaryota</taxon>
        <taxon>Fungi</taxon>
        <taxon>Dikarya</taxon>
        <taxon>Ascomycota</taxon>
        <taxon>Pezizomycotina</taxon>
        <taxon>Sordariomycetes</taxon>
        <taxon>Hypocreomycetidae</taxon>
        <taxon>Hypocreales</taxon>
        <taxon>Nectriaceae</taxon>
        <taxon>Fusarium</taxon>
    </lineage>
</organism>
<reference key="1">
    <citation type="journal article" date="2007" name="Science">
        <title>The Fusarium graminearum genome reveals a link between localized polymorphism and pathogen specialization.</title>
        <authorList>
            <person name="Cuomo C.A."/>
            <person name="Gueldener U."/>
            <person name="Xu J.-R."/>
            <person name="Trail F."/>
            <person name="Turgeon B.G."/>
            <person name="Di Pietro A."/>
            <person name="Walton J.D."/>
            <person name="Ma L.-J."/>
            <person name="Baker S.E."/>
            <person name="Rep M."/>
            <person name="Adam G."/>
            <person name="Antoniw J."/>
            <person name="Baldwin T."/>
            <person name="Calvo S.E."/>
            <person name="Chang Y.-L."/>
            <person name="DeCaprio D."/>
            <person name="Gale L.R."/>
            <person name="Gnerre S."/>
            <person name="Goswami R.S."/>
            <person name="Hammond-Kosack K."/>
            <person name="Harris L.J."/>
            <person name="Hilburn K."/>
            <person name="Kennell J.C."/>
            <person name="Kroken S."/>
            <person name="Magnuson J.K."/>
            <person name="Mannhaupt G."/>
            <person name="Mauceli E.W."/>
            <person name="Mewes H.-W."/>
            <person name="Mitterbauer R."/>
            <person name="Muehlbauer G."/>
            <person name="Muensterkoetter M."/>
            <person name="Nelson D."/>
            <person name="O'Donnell K."/>
            <person name="Ouellet T."/>
            <person name="Qi W."/>
            <person name="Quesneville H."/>
            <person name="Roncero M.I.G."/>
            <person name="Seong K.-Y."/>
            <person name="Tetko I.V."/>
            <person name="Urban M."/>
            <person name="Waalwijk C."/>
            <person name="Ward T.J."/>
            <person name="Yao J."/>
            <person name="Birren B.W."/>
            <person name="Kistler H.C."/>
        </authorList>
    </citation>
    <scope>NUCLEOTIDE SEQUENCE [LARGE SCALE GENOMIC DNA]</scope>
    <source>
        <strain>ATCC MYA-4620 / CBS 123657 / FGSC 9075 / NRRL 31084 / PH-1</strain>
    </source>
</reference>
<reference key="2">
    <citation type="journal article" date="2010" name="Nature">
        <title>Comparative genomics reveals mobile pathogenicity chromosomes in Fusarium.</title>
        <authorList>
            <person name="Ma L.-J."/>
            <person name="van der Does H.C."/>
            <person name="Borkovich K.A."/>
            <person name="Coleman J.J."/>
            <person name="Daboussi M.-J."/>
            <person name="Di Pietro A."/>
            <person name="Dufresne M."/>
            <person name="Freitag M."/>
            <person name="Grabherr M."/>
            <person name="Henrissat B."/>
            <person name="Houterman P.M."/>
            <person name="Kang S."/>
            <person name="Shim W.-B."/>
            <person name="Woloshuk C."/>
            <person name="Xie X."/>
            <person name="Xu J.-R."/>
            <person name="Antoniw J."/>
            <person name="Baker S.E."/>
            <person name="Bluhm B.H."/>
            <person name="Breakspear A."/>
            <person name="Brown D.W."/>
            <person name="Butchko R.A.E."/>
            <person name="Chapman S."/>
            <person name="Coulson R."/>
            <person name="Coutinho P.M."/>
            <person name="Danchin E.G.J."/>
            <person name="Diener A."/>
            <person name="Gale L.R."/>
            <person name="Gardiner D.M."/>
            <person name="Goff S."/>
            <person name="Hammond-Kosack K.E."/>
            <person name="Hilburn K."/>
            <person name="Hua-Van A."/>
            <person name="Jonkers W."/>
            <person name="Kazan K."/>
            <person name="Kodira C.D."/>
            <person name="Koehrsen M."/>
            <person name="Kumar L."/>
            <person name="Lee Y.-H."/>
            <person name="Li L."/>
            <person name="Manners J.M."/>
            <person name="Miranda-Saavedra D."/>
            <person name="Mukherjee M."/>
            <person name="Park G."/>
            <person name="Park J."/>
            <person name="Park S.-Y."/>
            <person name="Proctor R.H."/>
            <person name="Regev A."/>
            <person name="Ruiz-Roldan M.C."/>
            <person name="Sain D."/>
            <person name="Sakthikumar S."/>
            <person name="Sykes S."/>
            <person name="Schwartz D.C."/>
            <person name="Turgeon B.G."/>
            <person name="Wapinski I."/>
            <person name="Yoder O."/>
            <person name="Young S."/>
            <person name="Zeng Q."/>
            <person name="Zhou S."/>
            <person name="Galagan J."/>
            <person name="Cuomo C.A."/>
            <person name="Kistler H.C."/>
            <person name="Rep M."/>
        </authorList>
    </citation>
    <scope>GENOME REANNOTATION</scope>
    <source>
        <strain>ATCC MYA-4620 / CBS 123657 / FGSC 9075 / NRRL 31084 / PH-1</strain>
    </source>
</reference>
<reference key="3">
    <citation type="journal article" date="2015" name="BMC Genomics">
        <title>The completed genome sequence of the pathogenic ascomycete fungus Fusarium graminearum.</title>
        <authorList>
            <person name="King R."/>
            <person name="Urban M."/>
            <person name="Hammond-Kosack M.C.U."/>
            <person name="Hassani-Pak K."/>
            <person name="Hammond-Kosack K.E."/>
        </authorList>
    </citation>
    <scope>NUCLEOTIDE SEQUENCE [LARGE SCALE GENOMIC DNA]</scope>
    <source>
        <strain>ATCC MYA-4620 / CBS 123657 / FGSC 9075 / NRRL 31084 / PH-1</strain>
    </source>
</reference>
<reference key="4">
    <citation type="journal article" date="2012" name="Environ. Microbiol.">
        <title>Production of novel fusarielins by ectopic activation of the polyketide synthase 9 cluster in Fusarium graminearum.</title>
        <authorList>
            <person name="Soerensen J.L."/>
            <person name="Hansen F.T."/>
            <person name="Sondergaard T.E."/>
            <person name="Staerk D."/>
            <person name="Lee T.V."/>
            <person name="Wimmer R."/>
            <person name="Klitgaard L.G."/>
            <person name="Purup S."/>
            <person name="Giese H."/>
            <person name="Frandsen R.J."/>
        </authorList>
    </citation>
    <scope>INDUCTION</scope>
    <scope>FUNCTION</scope>
</reference>
<reference key="5">
    <citation type="journal article" date="2016" name="Molecules">
        <title>Functional Analysis of the Fusarielin Biosynthetic Gene Cluster.</title>
        <authorList>
            <person name="Droce A."/>
            <person name="Saei W."/>
            <person name="Joergensen S.H."/>
            <person name="Wimmer R."/>
            <person name="Giese H."/>
            <person name="Wollenberg R.D."/>
            <person name="Sondergaard T.E."/>
            <person name="Soerensen J.L."/>
        </authorList>
    </citation>
    <scope>FUNCTION</scope>
    <scope>DISRUPTION PHENOTYPE</scope>
    <scope>PATHWAY</scope>
</reference>